<accession>Q3JUJ4</accession>
<gene>
    <name evidence="1" type="primary">purT</name>
    <name type="ordered locus">BURPS1710b_1349</name>
</gene>
<name>PURT_BURP1</name>
<organism>
    <name type="scientific">Burkholderia pseudomallei (strain 1710b)</name>
    <dbReference type="NCBI Taxonomy" id="320372"/>
    <lineage>
        <taxon>Bacteria</taxon>
        <taxon>Pseudomonadati</taxon>
        <taxon>Pseudomonadota</taxon>
        <taxon>Betaproteobacteria</taxon>
        <taxon>Burkholderiales</taxon>
        <taxon>Burkholderiaceae</taxon>
        <taxon>Burkholderia</taxon>
        <taxon>pseudomallei group</taxon>
    </lineage>
</organism>
<sequence>MQIGQRLGTPLSPSATRVMLLGAGELGKEVIIALQRLGVEVIAVDRYPNAPGHQVAHRAHVIDMTDPDALRALVDAERPHLVVPEIEAIATDALAAIEAAGVCEVIPTARATQLTMNREGIRRLAAEELGLPTSPYAFAQSFDEFAAAVARIGFPCVVKPVMSSSGKGQSVVRSEADIEPAWRYAMAGGRVNHGRVIVEGFIRFDYEITQLTVRAIDPASGQTRTSFCAPIGHLQVAGDYVESWQPQPMSAKALERSRDIAHRVTSALGGRGIFGVELFVRGDDVWFSEVSPRPHDTGLVTLASQRQSEFELHARAILGLPVEPALATPAASAVIYGGLDEAGIAFEGVRDALAVPGADLRLFGKPESFAKRRMGVALATGANVDEARERAKRAAAAVRPVSAR</sequence>
<comment type="function">
    <text evidence="1">Involved in the de novo purine biosynthesis. Catalyzes the transfer of formate to 5-phospho-ribosyl-glycinamide (GAR), producing 5-phospho-ribosyl-N-formylglycinamide (FGAR). Formate is provided by PurU via hydrolysis of 10-formyl-tetrahydrofolate.</text>
</comment>
<comment type="catalytic activity">
    <reaction evidence="1">
        <text>N(1)-(5-phospho-beta-D-ribosyl)glycinamide + formate + ATP = N(2)-formyl-N(1)-(5-phospho-beta-D-ribosyl)glycinamide + ADP + phosphate + H(+)</text>
        <dbReference type="Rhea" id="RHEA:24829"/>
        <dbReference type="ChEBI" id="CHEBI:15378"/>
        <dbReference type="ChEBI" id="CHEBI:15740"/>
        <dbReference type="ChEBI" id="CHEBI:30616"/>
        <dbReference type="ChEBI" id="CHEBI:43474"/>
        <dbReference type="ChEBI" id="CHEBI:143788"/>
        <dbReference type="ChEBI" id="CHEBI:147286"/>
        <dbReference type="ChEBI" id="CHEBI:456216"/>
        <dbReference type="EC" id="6.3.1.21"/>
    </reaction>
    <physiologicalReaction direction="left-to-right" evidence="1">
        <dbReference type="Rhea" id="RHEA:24830"/>
    </physiologicalReaction>
</comment>
<comment type="pathway">
    <text evidence="1">Purine metabolism; IMP biosynthesis via de novo pathway; N(2)-formyl-N(1)-(5-phospho-D-ribosyl)glycinamide from N(1)-(5-phospho-D-ribosyl)glycinamide (formate route): step 1/1.</text>
</comment>
<comment type="subunit">
    <text evidence="1">Homodimer.</text>
</comment>
<comment type="similarity">
    <text evidence="1">Belongs to the PurK/PurT family.</text>
</comment>
<comment type="sequence caution" evidence="2">
    <conflict type="erroneous initiation">
        <sequence resource="EMBL-CDS" id="ABA50476"/>
    </conflict>
</comment>
<evidence type="ECO:0000255" key="1">
    <source>
        <dbReference type="HAMAP-Rule" id="MF_01643"/>
    </source>
</evidence>
<evidence type="ECO:0000305" key="2"/>
<dbReference type="EC" id="6.3.1.21" evidence="1"/>
<dbReference type="EMBL" id="CP000124">
    <property type="protein sequence ID" value="ABA50476.1"/>
    <property type="status" value="ALT_INIT"/>
    <property type="molecule type" value="Genomic_DNA"/>
</dbReference>
<dbReference type="RefSeq" id="WP_004522466.1">
    <property type="nucleotide sequence ID" value="NC_007434.1"/>
</dbReference>
<dbReference type="SMR" id="Q3JUJ4"/>
<dbReference type="EnsemblBacteria" id="ABA50476">
    <property type="protein sequence ID" value="ABA50476"/>
    <property type="gene ID" value="BURPS1710b_1349"/>
</dbReference>
<dbReference type="GeneID" id="93059610"/>
<dbReference type="KEGG" id="bpm:BURPS1710b_1349"/>
<dbReference type="HOGENOM" id="CLU_011534_1_3_4"/>
<dbReference type="UniPathway" id="UPA00074">
    <property type="reaction ID" value="UER00127"/>
</dbReference>
<dbReference type="Proteomes" id="UP000002700">
    <property type="component" value="Chromosome I"/>
</dbReference>
<dbReference type="GO" id="GO:0005829">
    <property type="term" value="C:cytosol"/>
    <property type="evidence" value="ECO:0007669"/>
    <property type="project" value="TreeGrafter"/>
</dbReference>
<dbReference type="GO" id="GO:0005524">
    <property type="term" value="F:ATP binding"/>
    <property type="evidence" value="ECO:0007669"/>
    <property type="project" value="UniProtKB-UniRule"/>
</dbReference>
<dbReference type="GO" id="GO:0000287">
    <property type="term" value="F:magnesium ion binding"/>
    <property type="evidence" value="ECO:0007669"/>
    <property type="project" value="InterPro"/>
</dbReference>
<dbReference type="GO" id="GO:0043815">
    <property type="term" value="F:phosphoribosylglycinamide formyltransferase 2 activity"/>
    <property type="evidence" value="ECO:0007669"/>
    <property type="project" value="UniProtKB-UniRule"/>
</dbReference>
<dbReference type="GO" id="GO:0004644">
    <property type="term" value="F:phosphoribosylglycinamide formyltransferase activity"/>
    <property type="evidence" value="ECO:0007669"/>
    <property type="project" value="InterPro"/>
</dbReference>
<dbReference type="GO" id="GO:0006189">
    <property type="term" value="P:'de novo' IMP biosynthetic process"/>
    <property type="evidence" value="ECO:0007669"/>
    <property type="project" value="UniProtKB-UniRule"/>
</dbReference>
<dbReference type="FunFam" id="3.30.1490.20:FF:000013">
    <property type="entry name" value="Formate-dependent phosphoribosylglycinamide formyltransferase"/>
    <property type="match status" value="1"/>
</dbReference>
<dbReference type="FunFam" id="3.40.50.20:FF:000007">
    <property type="entry name" value="Formate-dependent phosphoribosylglycinamide formyltransferase"/>
    <property type="match status" value="1"/>
</dbReference>
<dbReference type="Gene3D" id="3.40.50.20">
    <property type="match status" value="1"/>
</dbReference>
<dbReference type="Gene3D" id="3.30.1490.20">
    <property type="entry name" value="ATP-grasp fold, A domain"/>
    <property type="match status" value="1"/>
</dbReference>
<dbReference type="Gene3D" id="3.30.470.20">
    <property type="entry name" value="ATP-grasp fold, B domain"/>
    <property type="match status" value="1"/>
</dbReference>
<dbReference type="HAMAP" id="MF_01643">
    <property type="entry name" value="PurT"/>
    <property type="match status" value="1"/>
</dbReference>
<dbReference type="InterPro" id="IPR011761">
    <property type="entry name" value="ATP-grasp"/>
</dbReference>
<dbReference type="InterPro" id="IPR003135">
    <property type="entry name" value="ATP-grasp_carboxylate-amine"/>
</dbReference>
<dbReference type="InterPro" id="IPR013815">
    <property type="entry name" value="ATP_grasp_subdomain_1"/>
</dbReference>
<dbReference type="InterPro" id="IPR016185">
    <property type="entry name" value="PreATP-grasp_dom_sf"/>
</dbReference>
<dbReference type="InterPro" id="IPR005862">
    <property type="entry name" value="PurT"/>
</dbReference>
<dbReference type="InterPro" id="IPR054350">
    <property type="entry name" value="PurT/PurK_preATP-grasp"/>
</dbReference>
<dbReference type="InterPro" id="IPR048740">
    <property type="entry name" value="PurT_C"/>
</dbReference>
<dbReference type="InterPro" id="IPR011054">
    <property type="entry name" value="Rudment_hybrid_motif"/>
</dbReference>
<dbReference type="NCBIfam" id="NF006766">
    <property type="entry name" value="PRK09288.1"/>
    <property type="match status" value="1"/>
</dbReference>
<dbReference type="NCBIfam" id="TIGR01142">
    <property type="entry name" value="purT"/>
    <property type="match status" value="1"/>
</dbReference>
<dbReference type="PANTHER" id="PTHR43055">
    <property type="entry name" value="FORMATE-DEPENDENT PHOSPHORIBOSYLGLYCINAMIDE FORMYLTRANSFERASE"/>
    <property type="match status" value="1"/>
</dbReference>
<dbReference type="PANTHER" id="PTHR43055:SF1">
    <property type="entry name" value="FORMATE-DEPENDENT PHOSPHORIBOSYLGLYCINAMIDE FORMYLTRANSFERASE"/>
    <property type="match status" value="1"/>
</dbReference>
<dbReference type="Pfam" id="PF02222">
    <property type="entry name" value="ATP-grasp"/>
    <property type="match status" value="1"/>
</dbReference>
<dbReference type="Pfam" id="PF21244">
    <property type="entry name" value="PurT_C"/>
    <property type="match status" value="1"/>
</dbReference>
<dbReference type="Pfam" id="PF22660">
    <property type="entry name" value="RS_preATP-grasp-like"/>
    <property type="match status" value="1"/>
</dbReference>
<dbReference type="SUPFAM" id="SSF56059">
    <property type="entry name" value="Glutathione synthetase ATP-binding domain-like"/>
    <property type="match status" value="1"/>
</dbReference>
<dbReference type="SUPFAM" id="SSF52440">
    <property type="entry name" value="PreATP-grasp domain"/>
    <property type="match status" value="1"/>
</dbReference>
<dbReference type="SUPFAM" id="SSF51246">
    <property type="entry name" value="Rudiment single hybrid motif"/>
    <property type="match status" value="1"/>
</dbReference>
<dbReference type="PROSITE" id="PS50975">
    <property type="entry name" value="ATP_GRASP"/>
    <property type="match status" value="1"/>
</dbReference>
<reference key="1">
    <citation type="journal article" date="2010" name="Genome Biol. Evol.">
        <title>Continuing evolution of Burkholderia mallei through genome reduction and large-scale rearrangements.</title>
        <authorList>
            <person name="Losada L."/>
            <person name="Ronning C.M."/>
            <person name="DeShazer D."/>
            <person name="Woods D."/>
            <person name="Fedorova N."/>
            <person name="Kim H.S."/>
            <person name="Shabalina S.A."/>
            <person name="Pearson T.R."/>
            <person name="Brinkac L."/>
            <person name="Tan P."/>
            <person name="Nandi T."/>
            <person name="Crabtree J."/>
            <person name="Badger J."/>
            <person name="Beckstrom-Sternberg S."/>
            <person name="Saqib M."/>
            <person name="Schutzer S.E."/>
            <person name="Keim P."/>
            <person name="Nierman W.C."/>
        </authorList>
    </citation>
    <scope>NUCLEOTIDE SEQUENCE [LARGE SCALE GENOMIC DNA]</scope>
    <source>
        <strain>1710b</strain>
    </source>
</reference>
<keyword id="KW-0067">ATP-binding</keyword>
<keyword id="KW-0436">Ligase</keyword>
<keyword id="KW-0460">Magnesium</keyword>
<keyword id="KW-0479">Metal-binding</keyword>
<keyword id="KW-0547">Nucleotide-binding</keyword>
<keyword id="KW-0658">Purine biosynthesis</keyword>
<feature type="chain" id="PRO_0000319143" description="Formate-dependent phosphoribosylglycinamide formyltransferase">
    <location>
        <begin position="1"/>
        <end position="404"/>
    </location>
</feature>
<feature type="domain" description="ATP-grasp" evidence="1">
    <location>
        <begin position="123"/>
        <end position="318"/>
    </location>
</feature>
<feature type="binding site" evidence="1">
    <location>
        <begin position="25"/>
        <end position="26"/>
    </location>
    <ligand>
        <name>N(1)-(5-phospho-beta-D-ribosyl)glycinamide</name>
        <dbReference type="ChEBI" id="CHEBI:143788"/>
    </ligand>
</feature>
<feature type="binding site" evidence="1">
    <location>
        <position position="85"/>
    </location>
    <ligand>
        <name>N(1)-(5-phospho-beta-D-ribosyl)glycinamide</name>
        <dbReference type="ChEBI" id="CHEBI:143788"/>
    </ligand>
</feature>
<feature type="binding site" evidence="1">
    <location>
        <position position="118"/>
    </location>
    <ligand>
        <name>ATP</name>
        <dbReference type="ChEBI" id="CHEBI:30616"/>
    </ligand>
</feature>
<feature type="binding site" evidence="1">
    <location>
        <position position="159"/>
    </location>
    <ligand>
        <name>ATP</name>
        <dbReference type="ChEBI" id="CHEBI:30616"/>
    </ligand>
</feature>
<feature type="binding site" evidence="1">
    <location>
        <begin position="164"/>
        <end position="169"/>
    </location>
    <ligand>
        <name>ATP</name>
        <dbReference type="ChEBI" id="CHEBI:30616"/>
    </ligand>
</feature>
<feature type="binding site" evidence="1">
    <location>
        <begin position="199"/>
        <end position="202"/>
    </location>
    <ligand>
        <name>ATP</name>
        <dbReference type="ChEBI" id="CHEBI:30616"/>
    </ligand>
</feature>
<feature type="binding site" evidence="1">
    <location>
        <position position="207"/>
    </location>
    <ligand>
        <name>ATP</name>
        <dbReference type="ChEBI" id="CHEBI:30616"/>
    </ligand>
</feature>
<feature type="binding site" evidence="1">
    <location>
        <position position="277"/>
    </location>
    <ligand>
        <name>Mg(2+)</name>
        <dbReference type="ChEBI" id="CHEBI:18420"/>
    </ligand>
</feature>
<feature type="binding site" evidence="1">
    <location>
        <position position="289"/>
    </location>
    <ligand>
        <name>Mg(2+)</name>
        <dbReference type="ChEBI" id="CHEBI:18420"/>
    </ligand>
</feature>
<feature type="binding site" evidence="1">
    <location>
        <position position="296"/>
    </location>
    <ligand>
        <name>N(1)-(5-phospho-beta-D-ribosyl)glycinamide</name>
        <dbReference type="ChEBI" id="CHEBI:143788"/>
    </ligand>
</feature>
<feature type="binding site" evidence="1">
    <location>
        <position position="365"/>
    </location>
    <ligand>
        <name>N(1)-(5-phospho-beta-D-ribosyl)glycinamide</name>
        <dbReference type="ChEBI" id="CHEBI:143788"/>
    </ligand>
</feature>
<feature type="binding site" evidence="1">
    <location>
        <begin position="372"/>
        <end position="373"/>
    </location>
    <ligand>
        <name>N(1)-(5-phospho-beta-D-ribosyl)glycinamide</name>
        <dbReference type="ChEBI" id="CHEBI:143788"/>
    </ligand>
</feature>
<protein>
    <recommendedName>
        <fullName evidence="1">Formate-dependent phosphoribosylglycinamide formyltransferase</fullName>
        <ecNumber evidence="1">6.3.1.21</ecNumber>
    </recommendedName>
    <alternativeName>
        <fullName evidence="1">5'-phosphoribosylglycinamide transformylase 2</fullName>
    </alternativeName>
    <alternativeName>
        <fullName evidence="1">Formate-dependent GAR transformylase</fullName>
    </alternativeName>
    <alternativeName>
        <fullName evidence="1">GAR transformylase 2</fullName>
        <shortName evidence="1">GART 2</shortName>
    </alternativeName>
    <alternativeName>
        <fullName evidence="1">Non-folate glycinamide ribonucleotide transformylase</fullName>
    </alternativeName>
    <alternativeName>
        <fullName evidence="1">Phosphoribosylglycinamide formyltransferase 2</fullName>
    </alternativeName>
</protein>
<proteinExistence type="inferred from homology"/>